<feature type="chain" id="PRO_1000134391" description="Acyl-[acyl-carrier-protein]--UDP-N-acetylglucosamine O-acyltransferase">
    <location>
        <begin position="1"/>
        <end position="262"/>
    </location>
</feature>
<comment type="function">
    <text evidence="1">Involved in the biosynthesis of lipid A, a phosphorylated glycolipid that anchors the lipopolysaccharide to the outer membrane of the cell.</text>
</comment>
<comment type="catalytic activity">
    <reaction evidence="1">
        <text>a (3R)-hydroxyacyl-[ACP] + UDP-N-acetyl-alpha-D-glucosamine = a UDP-3-O-[(3R)-3-hydroxyacyl]-N-acetyl-alpha-D-glucosamine + holo-[ACP]</text>
        <dbReference type="Rhea" id="RHEA:67812"/>
        <dbReference type="Rhea" id="RHEA-COMP:9685"/>
        <dbReference type="Rhea" id="RHEA-COMP:9945"/>
        <dbReference type="ChEBI" id="CHEBI:57705"/>
        <dbReference type="ChEBI" id="CHEBI:64479"/>
        <dbReference type="ChEBI" id="CHEBI:78827"/>
        <dbReference type="ChEBI" id="CHEBI:173225"/>
        <dbReference type="EC" id="2.3.1.129"/>
    </reaction>
</comment>
<comment type="pathway">
    <text evidence="1">Glycolipid biosynthesis; lipid IV(A) biosynthesis; lipid IV(A) from (3R)-3-hydroxytetradecanoyl-[acyl-carrier-protein] and UDP-N-acetyl-alpha-D-glucosamine: step 1/6.</text>
</comment>
<comment type="subunit">
    <text evidence="1">Homotrimer.</text>
</comment>
<comment type="subcellular location">
    <subcellularLocation>
        <location evidence="1">Cytoplasm</location>
    </subcellularLocation>
</comment>
<comment type="similarity">
    <text evidence="1">Belongs to the transferase hexapeptide repeat family. LpxA subfamily.</text>
</comment>
<reference key="1">
    <citation type="submission" date="2009-02" db="EMBL/GenBank/DDBJ databases">
        <title>Vibrio splendidus str. LGP32 complete genome.</title>
        <authorList>
            <person name="Mazel D."/>
            <person name="Le Roux F."/>
        </authorList>
    </citation>
    <scope>NUCLEOTIDE SEQUENCE [LARGE SCALE GENOMIC DNA]</scope>
    <source>
        <strain>LGP32</strain>
    </source>
</reference>
<accession>B7VIQ6</accession>
<name>LPXA_VIBA3</name>
<protein>
    <recommendedName>
        <fullName evidence="1">Acyl-[acyl-carrier-protein]--UDP-N-acetylglucosamine O-acyltransferase</fullName>
        <shortName evidence="1">UDP-N-acetylglucosamine acyltransferase</shortName>
        <ecNumber evidence="1">2.3.1.129</ecNumber>
    </recommendedName>
</protein>
<keyword id="KW-0012">Acyltransferase</keyword>
<keyword id="KW-0963">Cytoplasm</keyword>
<keyword id="KW-0441">Lipid A biosynthesis</keyword>
<keyword id="KW-0444">Lipid biosynthesis</keyword>
<keyword id="KW-0443">Lipid metabolism</keyword>
<keyword id="KW-0677">Repeat</keyword>
<keyword id="KW-0808">Transferase</keyword>
<evidence type="ECO:0000255" key="1">
    <source>
        <dbReference type="HAMAP-Rule" id="MF_00387"/>
    </source>
</evidence>
<dbReference type="EC" id="2.3.1.129" evidence="1"/>
<dbReference type="EMBL" id="FM954972">
    <property type="protein sequence ID" value="CAV19502.1"/>
    <property type="molecule type" value="Genomic_DNA"/>
</dbReference>
<dbReference type="SMR" id="B7VIQ6"/>
<dbReference type="STRING" id="575788.VS_2340"/>
<dbReference type="KEGG" id="vsp:VS_2340"/>
<dbReference type="eggNOG" id="COG1043">
    <property type="taxonomic scope" value="Bacteria"/>
</dbReference>
<dbReference type="HOGENOM" id="CLU_061249_0_0_6"/>
<dbReference type="UniPathway" id="UPA00359">
    <property type="reaction ID" value="UER00477"/>
</dbReference>
<dbReference type="Proteomes" id="UP000009100">
    <property type="component" value="Chromosome 1"/>
</dbReference>
<dbReference type="GO" id="GO:0005737">
    <property type="term" value="C:cytoplasm"/>
    <property type="evidence" value="ECO:0007669"/>
    <property type="project" value="UniProtKB-SubCell"/>
</dbReference>
<dbReference type="GO" id="GO:0016020">
    <property type="term" value="C:membrane"/>
    <property type="evidence" value="ECO:0007669"/>
    <property type="project" value="GOC"/>
</dbReference>
<dbReference type="GO" id="GO:0008780">
    <property type="term" value="F:acyl-[acyl-carrier-protein]-UDP-N-acetylglucosamine O-acyltransferase activity"/>
    <property type="evidence" value="ECO:0007669"/>
    <property type="project" value="UniProtKB-UniRule"/>
</dbReference>
<dbReference type="GO" id="GO:0009245">
    <property type="term" value="P:lipid A biosynthetic process"/>
    <property type="evidence" value="ECO:0007669"/>
    <property type="project" value="UniProtKB-UniRule"/>
</dbReference>
<dbReference type="CDD" id="cd03351">
    <property type="entry name" value="LbH_UDP-GlcNAc_AT"/>
    <property type="match status" value="1"/>
</dbReference>
<dbReference type="Gene3D" id="2.160.10.10">
    <property type="entry name" value="Hexapeptide repeat proteins"/>
    <property type="match status" value="1"/>
</dbReference>
<dbReference type="Gene3D" id="1.20.1180.10">
    <property type="entry name" value="Udp N-acetylglucosamine O-acyltransferase, C-terminal domain"/>
    <property type="match status" value="1"/>
</dbReference>
<dbReference type="HAMAP" id="MF_00387">
    <property type="entry name" value="LpxA"/>
    <property type="match status" value="1"/>
</dbReference>
<dbReference type="InterPro" id="IPR029098">
    <property type="entry name" value="Acetyltransf_C"/>
</dbReference>
<dbReference type="InterPro" id="IPR037157">
    <property type="entry name" value="Acetyltransf_C_sf"/>
</dbReference>
<dbReference type="InterPro" id="IPR001451">
    <property type="entry name" value="Hexapep"/>
</dbReference>
<dbReference type="InterPro" id="IPR010137">
    <property type="entry name" value="Lipid_A_LpxA"/>
</dbReference>
<dbReference type="InterPro" id="IPR011004">
    <property type="entry name" value="Trimer_LpxA-like_sf"/>
</dbReference>
<dbReference type="NCBIfam" id="TIGR01852">
    <property type="entry name" value="lipid_A_lpxA"/>
    <property type="match status" value="1"/>
</dbReference>
<dbReference type="NCBIfam" id="NF003657">
    <property type="entry name" value="PRK05289.1"/>
    <property type="match status" value="1"/>
</dbReference>
<dbReference type="PANTHER" id="PTHR43480">
    <property type="entry name" value="ACYL-[ACYL-CARRIER-PROTEIN]--UDP-N-ACETYLGLUCOSAMINE O-ACYLTRANSFERASE"/>
    <property type="match status" value="1"/>
</dbReference>
<dbReference type="PANTHER" id="PTHR43480:SF1">
    <property type="entry name" value="ACYL-[ACYL-CARRIER-PROTEIN]--UDP-N-ACETYLGLUCOSAMINE O-ACYLTRANSFERASE, MITOCHONDRIAL-RELATED"/>
    <property type="match status" value="1"/>
</dbReference>
<dbReference type="Pfam" id="PF13720">
    <property type="entry name" value="Acetyltransf_11"/>
    <property type="match status" value="1"/>
</dbReference>
<dbReference type="Pfam" id="PF00132">
    <property type="entry name" value="Hexapep"/>
    <property type="match status" value="2"/>
</dbReference>
<dbReference type="PIRSF" id="PIRSF000456">
    <property type="entry name" value="UDP-GlcNAc_acltr"/>
    <property type="match status" value="1"/>
</dbReference>
<dbReference type="SUPFAM" id="SSF51161">
    <property type="entry name" value="Trimeric LpxA-like enzymes"/>
    <property type="match status" value="1"/>
</dbReference>
<organism>
    <name type="scientific">Vibrio atlanticus (strain LGP32)</name>
    <name type="common">Vibrio splendidus (strain Mel32)</name>
    <dbReference type="NCBI Taxonomy" id="575788"/>
    <lineage>
        <taxon>Bacteria</taxon>
        <taxon>Pseudomonadati</taxon>
        <taxon>Pseudomonadota</taxon>
        <taxon>Gammaproteobacteria</taxon>
        <taxon>Vibrionales</taxon>
        <taxon>Vibrionaceae</taxon>
        <taxon>Vibrio</taxon>
    </lineage>
</organism>
<gene>
    <name evidence="1" type="primary">lpxA</name>
    <name type="ordered locus">VS_2340</name>
</gene>
<sequence>MIHETAKIHPAAVIEGDVTIGANVTVGPFTYIAGNVTIGDDTEVMSHVVIKGHTTIGKQNRIFPHAVIGEENQDKKYGGEDTTVVIGDRNVIREAVQIHRGTTQDKATTVIGDDNLLCVNAHVAHDVIVGNHTHIGNNAILGGHVTVGDYAGVMALSAIHPFCSIGAYAYIGGCSAVVQDVLPYVLAQGNHAAPFGLNLVGLKRNGFEKPEIRALQKAYKELYRSGKTLEEAKAALVEMAKEFASVTPMLEMLESSERGIIR</sequence>
<proteinExistence type="inferred from homology"/>